<evidence type="ECO:0000250" key="1"/>
<evidence type="ECO:0000255" key="2"/>
<evidence type="ECO:0000255" key="3">
    <source>
        <dbReference type="PROSITE-ProRule" id="PRU00272"/>
    </source>
</evidence>
<evidence type="ECO:0000255" key="4">
    <source>
        <dbReference type="PROSITE-ProRule" id="PRU10048"/>
    </source>
</evidence>
<evidence type="ECO:0000255" key="5">
    <source>
        <dbReference type="PROSITE-ProRule" id="PRU10049"/>
    </source>
</evidence>
<keyword id="KW-0255">Endonuclease</keyword>
<keyword id="KW-0378">Hydrolase</keyword>
<keyword id="KW-0540">Nuclease</keyword>
<keyword id="KW-0614">Plasmid</keyword>
<keyword id="KW-0732">Signal</keyword>
<gene>
    <name type="primary">nuc</name>
</gene>
<organism>
    <name type="scientific">Shigella flexneri</name>
    <dbReference type="NCBI Taxonomy" id="623"/>
    <lineage>
        <taxon>Bacteria</taxon>
        <taxon>Pseudomonadati</taxon>
        <taxon>Pseudomonadota</taxon>
        <taxon>Gammaproteobacteria</taxon>
        <taxon>Enterobacterales</taxon>
        <taxon>Enterobacteriaceae</taxon>
        <taxon>Shigella</taxon>
    </lineage>
</organism>
<feature type="signal peptide" evidence="2">
    <location>
        <begin position="1"/>
        <end position="23"/>
    </location>
</feature>
<feature type="chain" id="PRO_0000034394" description="Micrococcal nuclease">
    <location>
        <begin position="24"/>
        <end position="174"/>
    </location>
</feature>
<feature type="active site" evidence="1">
    <location>
        <position position="52"/>
    </location>
</feature>
<feature type="active site" evidence="1">
    <location>
        <position position="60"/>
    </location>
</feature>
<feature type="active site" evidence="1">
    <location>
        <position position="94"/>
    </location>
</feature>
<dbReference type="EC" id="3.1.31.1"/>
<dbReference type="EMBL" id="U30471">
    <property type="protein sequence ID" value="AAA75246.1"/>
    <property type="molecule type" value="Genomic_DNA"/>
</dbReference>
<dbReference type="PIR" id="S20541">
    <property type="entry name" value="NCEBPX"/>
</dbReference>
<dbReference type="SMR" id="P29769"/>
<dbReference type="KEGG" id="ag:AAA75246"/>
<dbReference type="GO" id="GO:0016894">
    <property type="term" value="F:endonuclease activity, active with either ribo- or deoxyribonucleic acids and producing 3'-phosphomonoesters"/>
    <property type="evidence" value="ECO:0007669"/>
    <property type="project" value="UniProtKB-EC"/>
</dbReference>
<dbReference type="GO" id="GO:0003676">
    <property type="term" value="F:nucleic acid binding"/>
    <property type="evidence" value="ECO:0007669"/>
    <property type="project" value="InterPro"/>
</dbReference>
<dbReference type="CDD" id="cd00175">
    <property type="entry name" value="SNc"/>
    <property type="match status" value="1"/>
</dbReference>
<dbReference type="Gene3D" id="2.40.50.90">
    <property type="match status" value="1"/>
</dbReference>
<dbReference type="InterPro" id="IPR035437">
    <property type="entry name" value="SNase_OB-fold_sf"/>
</dbReference>
<dbReference type="InterPro" id="IPR016071">
    <property type="entry name" value="Staphylococal_nuclease_OB-fold"/>
</dbReference>
<dbReference type="InterPro" id="IPR002071">
    <property type="entry name" value="Thermonucl_AS"/>
</dbReference>
<dbReference type="PANTHER" id="PTHR12302">
    <property type="entry name" value="EBNA2 BINDING PROTEIN P100"/>
    <property type="match status" value="1"/>
</dbReference>
<dbReference type="PANTHER" id="PTHR12302:SF3">
    <property type="entry name" value="SERINE_THREONINE-PROTEIN KINASE 31"/>
    <property type="match status" value="1"/>
</dbReference>
<dbReference type="Pfam" id="PF00565">
    <property type="entry name" value="SNase"/>
    <property type="match status" value="1"/>
</dbReference>
<dbReference type="SMART" id="SM00318">
    <property type="entry name" value="SNc"/>
    <property type="match status" value="1"/>
</dbReference>
<dbReference type="SUPFAM" id="SSF50199">
    <property type="entry name" value="Staphylococcal nuclease"/>
    <property type="match status" value="1"/>
</dbReference>
<dbReference type="PROSITE" id="PS01123">
    <property type="entry name" value="TNASE_1"/>
    <property type="match status" value="1"/>
</dbReference>
<dbReference type="PROSITE" id="PS01284">
    <property type="entry name" value="TNASE_2"/>
    <property type="match status" value="1"/>
</dbReference>
<dbReference type="PROSITE" id="PS50830">
    <property type="entry name" value="TNASE_3"/>
    <property type="match status" value="1"/>
</dbReference>
<reference key="1">
    <citation type="journal article" date="1992" name="Mol. Microbiol.">
        <title>A gene near the plasmid pSa origin of replication encodes a nuclease.</title>
        <authorList>
            <person name="Close S.M."/>
            <person name="Kado C.I."/>
        </authorList>
    </citation>
    <scope>NUCLEOTIDE SEQUENCE [GENOMIC DNA]</scope>
</reference>
<comment type="catalytic activity">
    <reaction evidence="4 5">
        <text>Endonucleolytic cleavage to nucleoside 3'-phosphates and 3'-phosphooligonucleotide end-products.</text>
        <dbReference type="EC" id="3.1.31.1"/>
    </reaction>
</comment>
<comment type="similarity">
    <text evidence="3">Belongs to the thermonuclease family.</text>
</comment>
<accession>P29769</accession>
<proteinExistence type="inferred from homology"/>
<protein>
    <recommendedName>
        <fullName>Micrococcal nuclease</fullName>
        <ecNumber>3.1.31.1</ecNumber>
    </recommendedName>
</protein>
<name>NUC_SHIFL</name>
<geneLocation type="plasmid">
    <name>IncW pSa</name>
</geneLocation>
<sequence>MKSALAALRAVAAAVVLIVSVPAWADFRGEVVRILDGDTIDVLVNRQTIRVRLADIDAPESGQAFGSRARQRLADLTFRQEVQVTEKEVDRYGRTLGVVYAPLQYPGGQTQLTNINAIMVQEGMAWAYRYYGKPTDAQMYEYEKEARRQRLGLWSDPNAQEPWKWRRASKNATN</sequence>